<comment type="function">
    <text evidence="1">IGPS catalyzes the conversion of PRFAR and glutamine to IGP, AICAR and glutamate. The HisF subunit catalyzes the cyclization activity that produces IGP and AICAR from PRFAR using the ammonia provided by the HisH subunit.</text>
</comment>
<comment type="catalytic activity">
    <reaction evidence="1">
        <text>5-[(5-phospho-1-deoxy-D-ribulos-1-ylimino)methylamino]-1-(5-phospho-beta-D-ribosyl)imidazole-4-carboxamide + L-glutamine = D-erythro-1-(imidazol-4-yl)glycerol 3-phosphate + 5-amino-1-(5-phospho-beta-D-ribosyl)imidazole-4-carboxamide + L-glutamate + H(+)</text>
        <dbReference type="Rhea" id="RHEA:24793"/>
        <dbReference type="ChEBI" id="CHEBI:15378"/>
        <dbReference type="ChEBI" id="CHEBI:29985"/>
        <dbReference type="ChEBI" id="CHEBI:58278"/>
        <dbReference type="ChEBI" id="CHEBI:58359"/>
        <dbReference type="ChEBI" id="CHEBI:58475"/>
        <dbReference type="ChEBI" id="CHEBI:58525"/>
        <dbReference type="EC" id="4.3.2.10"/>
    </reaction>
</comment>
<comment type="pathway">
    <text evidence="1">Amino-acid biosynthesis; L-histidine biosynthesis; L-histidine from 5-phospho-alpha-D-ribose 1-diphosphate: step 5/9.</text>
</comment>
<comment type="subunit">
    <text evidence="1">Heterodimer of HisH and HisF.</text>
</comment>
<comment type="subcellular location">
    <subcellularLocation>
        <location evidence="1">Cytoplasm</location>
    </subcellularLocation>
</comment>
<comment type="similarity">
    <text evidence="1">Belongs to the HisA/HisF family.</text>
</comment>
<protein>
    <recommendedName>
        <fullName evidence="1">Imidazole glycerol phosphate synthase subunit HisF</fullName>
        <ecNumber evidence="1">4.3.2.10</ecNumber>
    </recommendedName>
    <alternativeName>
        <fullName evidence="1">IGP synthase cyclase subunit</fullName>
    </alternativeName>
    <alternativeName>
        <fullName evidence="1">IGP synthase subunit HisF</fullName>
    </alternativeName>
    <alternativeName>
        <fullName evidence="1">ImGP synthase subunit HisF</fullName>
        <shortName evidence="1">IGPS subunit HisF</shortName>
    </alternativeName>
</protein>
<reference key="1">
    <citation type="journal article" date="2009" name="BMC Microbiol.">
        <title>The genome sequence of Geobacter metallireducens: features of metabolism, physiology and regulation common and dissimilar to Geobacter sulfurreducens.</title>
        <authorList>
            <person name="Aklujkar M."/>
            <person name="Krushkal J."/>
            <person name="DiBartolo G."/>
            <person name="Lapidus A."/>
            <person name="Land M.L."/>
            <person name="Lovley D.R."/>
        </authorList>
    </citation>
    <scope>NUCLEOTIDE SEQUENCE [LARGE SCALE GENOMIC DNA]</scope>
    <source>
        <strain>ATCC 53774 / DSM 7210 / GS-15</strain>
    </source>
</reference>
<gene>
    <name evidence="1" type="primary">hisF</name>
    <name type="ordered locus">Gmet_0389</name>
</gene>
<dbReference type="EC" id="4.3.2.10" evidence="1"/>
<dbReference type="EMBL" id="CP000148">
    <property type="protein sequence ID" value="ABB30632.1"/>
    <property type="molecule type" value="Genomic_DNA"/>
</dbReference>
<dbReference type="RefSeq" id="WP_004512361.1">
    <property type="nucleotide sequence ID" value="NC_007517.1"/>
</dbReference>
<dbReference type="SMR" id="Q39YP2"/>
<dbReference type="STRING" id="269799.Gmet_0389"/>
<dbReference type="KEGG" id="gme:Gmet_0389"/>
<dbReference type="eggNOG" id="COG0107">
    <property type="taxonomic scope" value="Bacteria"/>
</dbReference>
<dbReference type="HOGENOM" id="CLU_048577_4_0_7"/>
<dbReference type="UniPathway" id="UPA00031">
    <property type="reaction ID" value="UER00010"/>
</dbReference>
<dbReference type="Proteomes" id="UP000007073">
    <property type="component" value="Chromosome"/>
</dbReference>
<dbReference type="GO" id="GO:0005737">
    <property type="term" value="C:cytoplasm"/>
    <property type="evidence" value="ECO:0007669"/>
    <property type="project" value="UniProtKB-SubCell"/>
</dbReference>
<dbReference type="GO" id="GO:0000107">
    <property type="term" value="F:imidazoleglycerol-phosphate synthase activity"/>
    <property type="evidence" value="ECO:0007669"/>
    <property type="project" value="UniProtKB-UniRule"/>
</dbReference>
<dbReference type="GO" id="GO:0016829">
    <property type="term" value="F:lyase activity"/>
    <property type="evidence" value="ECO:0007669"/>
    <property type="project" value="UniProtKB-KW"/>
</dbReference>
<dbReference type="GO" id="GO:0000105">
    <property type="term" value="P:L-histidine biosynthetic process"/>
    <property type="evidence" value="ECO:0007669"/>
    <property type="project" value="UniProtKB-UniRule"/>
</dbReference>
<dbReference type="CDD" id="cd04731">
    <property type="entry name" value="HisF"/>
    <property type="match status" value="1"/>
</dbReference>
<dbReference type="FunFam" id="3.20.20.70:FF:000006">
    <property type="entry name" value="Imidazole glycerol phosphate synthase subunit HisF"/>
    <property type="match status" value="1"/>
</dbReference>
<dbReference type="Gene3D" id="3.20.20.70">
    <property type="entry name" value="Aldolase class I"/>
    <property type="match status" value="1"/>
</dbReference>
<dbReference type="HAMAP" id="MF_01013">
    <property type="entry name" value="HisF"/>
    <property type="match status" value="1"/>
</dbReference>
<dbReference type="InterPro" id="IPR013785">
    <property type="entry name" value="Aldolase_TIM"/>
</dbReference>
<dbReference type="InterPro" id="IPR006062">
    <property type="entry name" value="His_biosynth"/>
</dbReference>
<dbReference type="InterPro" id="IPR004651">
    <property type="entry name" value="HisF"/>
</dbReference>
<dbReference type="InterPro" id="IPR050064">
    <property type="entry name" value="IGPS_HisA/HisF"/>
</dbReference>
<dbReference type="InterPro" id="IPR011060">
    <property type="entry name" value="RibuloseP-bd_barrel"/>
</dbReference>
<dbReference type="NCBIfam" id="TIGR00735">
    <property type="entry name" value="hisF"/>
    <property type="match status" value="1"/>
</dbReference>
<dbReference type="PANTHER" id="PTHR21235:SF2">
    <property type="entry name" value="IMIDAZOLE GLYCEROL PHOSPHATE SYNTHASE HISHF"/>
    <property type="match status" value="1"/>
</dbReference>
<dbReference type="PANTHER" id="PTHR21235">
    <property type="entry name" value="IMIDAZOLE GLYCEROL PHOSPHATE SYNTHASE SUBUNIT HISF/H IGP SYNTHASE SUBUNIT HISF/H"/>
    <property type="match status" value="1"/>
</dbReference>
<dbReference type="Pfam" id="PF00977">
    <property type="entry name" value="His_biosynth"/>
    <property type="match status" value="1"/>
</dbReference>
<dbReference type="SUPFAM" id="SSF51366">
    <property type="entry name" value="Ribulose-phoshate binding barrel"/>
    <property type="match status" value="1"/>
</dbReference>
<keyword id="KW-0028">Amino-acid biosynthesis</keyword>
<keyword id="KW-0963">Cytoplasm</keyword>
<keyword id="KW-0368">Histidine biosynthesis</keyword>
<keyword id="KW-0456">Lyase</keyword>
<keyword id="KW-1185">Reference proteome</keyword>
<accession>Q39YP2</accession>
<feature type="chain" id="PRO_0000230128" description="Imidazole glycerol phosphate synthase subunit HisF">
    <location>
        <begin position="1"/>
        <end position="253"/>
    </location>
</feature>
<feature type="active site" evidence="1">
    <location>
        <position position="11"/>
    </location>
</feature>
<feature type="active site" evidence="1">
    <location>
        <position position="130"/>
    </location>
</feature>
<organism>
    <name type="scientific">Geobacter metallireducens (strain ATCC 53774 / DSM 7210 / GS-15)</name>
    <dbReference type="NCBI Taxonomy" id="269799"/>
    <lineage>
        <taxon>Bacteria</taxon>
        <taxon>Pseudomonadati</taxon>
        <taxon>Thermodesulfobacteriota</taxon>
        <taxon>Desulfuromonadia</taxon>
        <taxon>Geobacterales</taxon>
        <taxon>Geobacteraceae</taxon>
        <taxon>Geobacter</taxon>
    </lineage>
</organism>
<sequence length="253" mass="27596">MLTKRIIPCLDVKGGRVVKGVQFLELRDAGDPVEIAEAYDRQGADELTFLDITASSDERNIIIDVVRRTAERVFMPLTVGGGVRIVDDIRNLLNAGADKVSINTAAVHRPEFVREAAERFGSQCTVVAIDARQVPGENRWEVYTHGGRNPTGIDAVEWARRMEEYGAGEILLTSMDRDGTKDGYDISLTRAIVDAVSIPVIASGGVGNLEHLHDGFVKAGASACLAASIFHYKEYTIGEAKEYLRGRGVPVRL</sequence>
<proteinExistence type="inferred from homology"/>
<evidence type="ECO:0000255" key="1">
    <source>
        <dbReference type="HAMAP-Rule" id="MF_01013"/>
    </source>
</evidence>
<name>HIS6_GEOMG</name>